<organism>
    <name type="scientific">Streptococcus mutans serotype c (strain ATCC 700610 / UA159)</name>
    <dbReference type="NCBI Taxonomy" id="210007"/>
    <lineage>
        <taxon>Bacteria</taxon>
        <taxon>Bacillati</taxon>
        <taxon>Bacillota</taxon>
        <taxon>Bacilli</taxon>
        <taxon>Lactobacillales</taxon>
        <taxon>Streptococcaceae</taxon>
        <taxon>Streptococcus</taxon>
    </lineage>
</organism>
<reference key="1">
    <citation type="journal article" date="2002" name="Proc. Natl. Acad. Sci. U.S.A.">
        <title>Genome sequence of Streptococcus mutans UA159, a cariogenic dental pathogen.</title>
        <authorList>
            <person name="Ajdic D.J."/>
            <person name="McShan W.M."/>
            <person name="McLaughlin R.E."/>
            <person name="Savic G."/>
            <person name="Chang J."/>
            <person name="Carson M.B."/>
            <person name="Primeaux C."/>
            <person name="Tian R."/>
            <person name="Kenton S."/>
            <person name="Jia H.G."/>
            <person name="Lin S.P."/>
            <person name="Qian Y."/>
            <person name="Li S."/>
            <person name="Zhu H."/>
            <person name="Najar F.Z."/>
            <person name="Lai H."/>
            <person name="White J."/>
            <person name="Roe B.A."/>
            <person name="Ferretti J.J."/>
        </authorList>
    </citation>
    <scope>NUCLEOTIDE SEQUENCE [LARGE SCALE GENOMIC DNA]</scope>
    <source>
        <strain>ATCC 700610 / UA159</strain>
    </source>
</reference>
<evidence type="ECO:0000255" key="1">
    <source>
        <dbReference type="HAMAP-Rule" id="MF_00397"/>
    </source>
</evidence>
<gene>
    <name evidence="1" type="primary">citG</name>
    <name type="ordered locus">SMU_1011</name>
</gene>
<protein>
    <recommendedName>
        <fullName evidence="1">Probable 2-(5''-triphosphoribosyl)-3'-dephosphocoenzyme-A synthase</fullName>
        <shortName evidence="1">2-(5''-triphosphoribosyl)-3'-dephospho-CoA synthase</shortName>
        <ecNumber evidence="1">2.4.2.52</ecNumber>
    </recommendedName>
</protein>
<accession>Q8DUC9</accession>
<proteinExistence type="inferred from homology"/>
<sequence>MQTKEKLASLSYLAVKSLLYELNLTPKPGLVDCHNNGAHNDMDFYTFLDSILSLSPFFKKYIEVGWLYHNESPQYLFNQLRKLGIEAEAAMFSATERVNTHKGINFSFALLLGATGSYLAKHIELIQEKRRFMPQDSLTICHLAGEMSMHLIQNDLSHVETKRNLTYGEKLFLQYGLKGLRGEASQGYPSLTQKALPFFRNELLKKQDIQISQLKLLLYLMTFIEDSNIIHRGGIKSWKKVQQEAQTLLEKDLPPYQLKEQLNSYNQILTDRHLSPGGAADLLSLTLYFSFLEQLI</sequence>
<keyword id="KW-0067">ATP-binding</keyword>
<keyword id="KW-0547">Nucleotide-binding</keyword>
<keyword id="KW-1185">Reference proteome</keyword>
<keyword id="KW-0808">Transferase</keyword>
<dbReference type="EC" id="2.4.2.52" evidence="1"/>
<dbReference type="EMBL" id="AE014133">
    <property type="protein sequence ID" value="AAN58712.1"/>
    <property type="molecule type" value="Genomic_DNA"/>
</dbReference>
<dbReference type="RefSeq" id="NP_721406.1">
    <property type="nucleotide sequence ID" value="NC_004350.2"/>
</dbReference>
<dbReference type="RefSeq" id="WP_002263234.1">
    <property type="nucleotide sequence ID" value="NC_004350.2"/>
</dbReference>
<dbReference type="STRING" id="210007.SMU_1011"/>
<dbReference type="KEGG" id="smu:SMU_1011"/>
<dbReference type="PATRIC" id="fig|210007.7.peg.904"/>
<dbReference type="eggNOG" id="COG1767">
    <property type="taxonomic scope" value="Bacteria"/>
</dbReference>
<dbReference type="HOGENOM" id="CLU_056179_1_0_9"/>
<dbReference type="OrthoDB" id="114886at2"/>
<dbReference type="PhylomeDB" id="Q8DUC9"/>
<dbReference type="Proteomes" id="UP000002512">
    <property type="component" value="Chromosome"/>
</dbReference>
<dbReference type="GO" id="GO:0005524">
    <property type="term" value="F:ATP binding"/>
    <property type="evidence" value="ECO:0007669"/>
    <property type="project" value="UniProtKB-KW"/>
</dbReference>
<dbReference type="GO" id="GO:0046917">
    <property type="term" value="F:triphosphoribosyl-dephospho-CoA synthase activity"/>
    <property type="evidence" value="ECO:0007669"/>
    <property type="project" value="UniProtKB-UniRule"/>
</dbReference>
<dbReference type="GO" id="GO:0051191">
    <property type="term" value="P:prosthetic group biosynthetic process"/>
    <property type="evidence" value="ECO:0007669"/>
    <property type="project" value="TreeGrafter"/>
</dbReference>
<dbReference type="Gene3D" id="1.10.4200.10">
    <property type="entry name" value="Triphosphoribosyl-dephospho-CoA protein"/>
    <property type="match status" value="1"/>
</dbReference>
<dbReference type="HAMAP" id="MF_00397">
    <property type="entry name" value="CitG"/>
    <property type="match status" value="1"/>
</dbReference>
<dbReference type="InterPro" id="IPR002736">
    <property type="entry name" value="CitG"/>
</dbReference>
<dbReference type="InterPro" id="IPR017551">
    <property type="entry name" value="TriPribosyl-deP-CoA_syn_CitG"/>
</dbReference>
<dbReference type="NCBIfam" id="TIGR03125">
    <property type="entry name" value="citrate_citG"/>
    <property type="match status" value="1"/>
</dbReference>
<dbReference type="PANTHER" id="PTHR30201:SF2">
    <property type="entry name" value="2-(5''-TRIPHOSPHORIBOSYL)-3'-DEPHOSPHOCOENZYME-A SYNTHASE"/>
    <property type="match status" value="1"/>
</dbReference>
<dbReference type="PANTHER" id="PTHR30201">
    <property type="entry name" value="TRIPHOSPHORIBOSYL-DEPHOSPHO-COA SYNTHASE"/>
    <property type="match status" value="1"/>
</dbReference>
<dbReference type="Pfam" id="PF01874">
    <property type="entry name" value="CitG"/>
    <property type="match status" value="1"/>
</dbReference>
<feature type="chain" id="PRO_0000214676" description="Probable 2-(5''-triphosphoribosyl)-3'-dephosphocoenzyme-A synthase">
    <location>
        <begin position="1"/>
        <end position="296"/>
    </location>
</feature>
<name>CITG_STRMU</name>
<comment type="catalytic activity">
    <reaction evidence="1">
        <text>3'-dephospho-CoA + ATP = 2'-(5''-triphospho-alpha-D-ribosyl)-3'-dephospho-CoA + adenine</text>
        <dbReference type="Rhea" id="RHEA:15117"/>
        <dbReference type="ChEBI" id="CHEBI:16708"/>
        <dbReference type="ChEBI" id="CHEBI:30616"/>
        <dbReference type="ChEBI" id="CHEBI:57328"/>
        <dbReference type="ChEBI" id="CHEBI:61378"/>
        <dbReference type="EC" id="2.4.2.52"/>
    </reaction>
</comment>
<comment type="similarity">
    <text evidence="1">Belongs to the CitG/MdcB family.</text>
</comment>